<dbReference type="EC" id="3.5.4.30" evidence="1"/>
<dbReference type="EMBL" id="AE009439">
    <property type="protein sequence ID" value="AAM01508.1"/>
    <property type="molecule type" value="Genomic_DNA"/>
</dbReference>
<dbReference type="RefSeq" id="WP_011018663.1">
    <property type="nucleotide sequence ID" value="NC_003551.1"/>
</dbReference>
<dbReference type="SMR" id="Q8TYK5"/>
<dbReference type="FunCoup" id="Q8TYK5">
    <property type="interactions" value="23"/>
</dbReference>
<dbReference type="STRING" id="190192.MK0291"/>
<dbReference type="PaxDb" id="190192-MK0291"/>
<dbReference type="EnsemblBacteria" id="AAM01508">
    <property type="protein sequence ID" value="AAM01508"/>
    <property type="gene ID" value="MK0291"/>
</dbReference>
<dbReference type="GeneID" id="1477594"/>
<dbReference type="KEGG" id="mka:MK0291"/>
<dbReference type="PATRIC" id="fig|190192.8.peg.295"/>
<dbReference type="HOGENOM" id="CLU_087476_2_1_2"/>
<dbReference type="InParanoid" id="Q8TYK5"/>
<dbReference type="OrthoDB" id="33242at2157"/>
<dbReference type="UniPathway" id="UPA00610">
    <property type="reaction ID" value="UER00667"/>
</dbReference>
<dbReference type="Proteomes" id="UP000001826">
    <property type="component" value="Chromosome"/>
</dbReference>
<dbReference type="GO" id="GO:0033973">
    <property type="term" value="F:dCTP deaminase (dUMP-forming) activity"/>
    <property type="evidence" value="ECO:0007669"/>
    <property type="project" value="UniProtKB-UniRule"/>
</dbReference>
<dbReference type="GO" id="GO:0008829">
    <property type="term" value="F:dCTP deaminase activity"/>
    <property type="evidence" value="ECO:0007669"/>
    <property type="project" value="InterPro"/>
</dbReference>
<dbReference type="GO" id="GO:0000166">
    <property type="term" value="F:nucleotide binding"/>
    <property type="evidence" value="ECO:0007669"/>
    <property type="project" value="UniProtKB-KW"/>
</dbReference>
<dbReference type="GO" id="GO:0006226">
    <property type="term" value="P:dUMP biosynthetic process"/>
    <property type="evidence" value="ECO:0007669"/>
    <property type="project" value="UniProtKB-UniRule"/>
</dbReference>
<dbReference type="GO" id="GO:0006229">
    <property type="term" value="P:dUTP biosynthetic process"/>
    <property type="evidence" value="ECO:0007669"/>
    <property type="project" value="InterPro"/>
</dbReference>
<dbReference type="GO" id="GO:0015949">
    <property type="term" value="P:nucleobase-containing small molecule interconversion"/>
    <property type="evidence" value="ECO:0007669"/>
    <property type="project" value="TreeGrafter"/>
</dbReference>
<dbReference type="CDD" id="cd07557">
    <property type="entry name" value="trimeric_dUTPase"/>
    <property type="match status" value="1"/>
</dbReference>
<dbReference type="Gene3D" id="2.70.40.10">
    <property type="match status" value="1"/>
</dbReference>
<dbReference type="HAMAP" id="MF_00146">
    <property type="entry name" value="dCTP_deaminase"/>
    <property type="match status" value="1"/>
</dbReference>
<dbReference type="InterPro" id="IPR011962">
    <property type="entry name" value="dCTP_deaminase"/>
</dbReference>
<dbReference type="InterPro" id="IPR036157">
    <property type="entry name" value="dUTPase-like_sf"/>
</dbReference>
<dbReference type="InterPro" id="IPR033704">
    <property type="entry name" value="dUTPase_trimeric"/>
</dbReference>
<dbReference type="NCBIfam" id="TIGR02274">
    <property type="entry name" value="dCTP_deam"/>
    <property type="match status" value="1"/>
</dbReference>
<dbReference type="PANTHER" id="PTHR42680">
    <property type="entry name" value="DCTP DEAMINASE"/>
    <property type="match status" value="1"/>
</dbReference>
<dbReference type="PANTHER" id="PTHR42680:SF3">
    <property type="entry name" value="DCTP DEAMINASE"/>
    <property type="match status" value="1"/>
</dbReference>
<dbReference type="Pfam" id="PF22769">
    <property type="entry name" value="DCD"/>
    <property type="match status" value="1"/>
</dbReference>
<dbReference type="SUPFAM" id="SSF51283">
    <property type="entry name" value="dUTPase-like"/>
    <property type="match status" value="1"/>
</dbReference>
<feature type="chain" id="PRO_0000156030" description="dCTP deaminase, dUMP-forming">
    <location>
        <begin position="1"/>
        <end position="193"/>
    </location>
</feature>
<feature type="region of interest" description="Disordered" evidence="2">
    <location>
        <begin position="169"/>
        <end position="193"/>
    </location>
</feature>
<feature type="compositionally biased region" description="Basic and acidic residues" evidence="2">
    <location>
        <begin position="173"/>
        <end position="193"/>
    </location>
</feature>
<feature type="active site" description="Proton donor/acceptor" evidence="1">
    <location>
        <position position="135"/>
    </location>
</feature>
<feature type="binding site" evidence="1">
    <location>
        <begin position="107"/>
        <end position="112"/>
    </location>
    <ligand>
        <name>dCTP</name>
        <dbReference type="ChEBI" id="CHEBI:61481"/>
    </ligand>
</feature>
<feature type="binding site" evidence="1">
    <location>
        <position position="125"/>
    </location>
    <ligand>
        <name>dCTP</name>
        <dbReference type="ChEBI" id="CHEBI:61481"/>
    </ligand>
</feature>
<feature type="binding site" evidence="1">
    <location>
        <begin position="133"/>
        <end position="135"/>
    </location>
    <ligand>
        <name>dCTP</name>
        <dbReference type="ChEBI" id="CHEBI:61481"/>
    </ligand>
</feature>
<feature type="binding site" evidence="1">
    <location>
        <position position="154"/>
    </location>
    <ligand>
        <name>dCTP</name>
        <dbReference type="ChEBI" id="CHEBI:61481"/>
    </ligand>
</feature>
<feature type="binding site" evidence="1">
    <location>
        <position position="168"/>
    </location>
    <ligand>
        <name>dCTP</name>
        <dbReference type="ChEBI" id="CHEBI:61481"/>
    </ligand>
</feature>
<feature type="site" description="Important for bifunctional activity" evidence="1">
    <location>
        <begin position="122"/>
        <end position="123"/>
    </location>
</feature>
<accession>Q8TYK5</accession>
<gene>
    <name evidence="1" type="primary">dcd</name>
    <name type="ordered locus">MK0291</name>
</gene>
<name>DCDB_METKA</name>
<proteinExistence type="inferred from homology"/>
<keyword id="KW-0378">Hydrolase</keyword>
<keyword id="KW-0546">Nucleotide metabolism</keyword>
<keyword id="KW-0547">Nucleotide-binding</keyword>
<keyword id="KW-1185">Reference proteome</keyword>
<reference key="1">
    <citation type="journal article" date="2002" name="Proc. Natl. Acad. Sci. U.S.A.">
        <title>The complete genome of hyperthermophile Methanopyrus kandleri AV19 and monophyly of archaeal methanogens.</title>
        <authorList>
            <person name="Slesarev A.I."/>
            <person name="Mezhevaya K.V."/>
            <person name="Makarova K.S."/>
            <person name="Polushin N.N."/>
            <person name="Shcherbinina O.V."/>
            <person name="Shakhova V.V."/>
            <person name="Belova G.I."/>
            <person name="Aravind L."/>
            <person name="Natale D.A."/>
            <person name="Rogozin I.B."/>
            <person name="Tatusov R.L."/>
            <person name="Wolf Y.I."/>
            <person name="Stetter K.O."/>
            <person name="Malykh A.G."/>
            <person name="Koonin E.V."/>
            <person name="Kozyavkin S.A."/>
        </authorList>
    </citation>
    <scope>NUCLEOTIDE SEQUENCE [LARGE SCALE GENOMIC DNA]</scope>
    <source>
        <strain>AV19 / DSM 6324 / JCM 9639 / NBRC 100938</strain>
    </source>
</reference>
<organism>
    <name type="scientific">Methanopyrus kandleri (strain AV19 / DSM 6324 / JCM 9639 / NBRC 100938)</name>
    <dbReference type="NCBI Taxonomy" id="190192"/>
    <lineage>
        <taxon>Archaea</taxon>
        <taxon>Methanobacteriati</taxon>
        <taxon>Methanobacteriota</taxon>
        <taxon>Methanomada group</taxon>
        <taxon>Methanopyri</taxon>
        <taxon>Methanopyrales</taxon>
        <taxon>Methanopyraceae</taxon>
        <taxon>Methanopyrus</taxon>
    </lineage>
</organism>
<evidence type="ECO:0000255" key="1">
    <source>
        <dbReference type="HAMAP-Rule" id="MF_00146"/>
    </source>
</evidence>
<evidence type="ECO:0000256" key="2">
    <source>
        <dbReference type="SAM" id="MobiDB-lite"/>
    </source>
</evidence>
<sequence length="193" mass="21593">MTVLSDRDIKRALEEGDIVVKPLEEEYLEEALGPASLDLRLGNEFVVFKTLHKPCIDPTVDAGENTERIVIDEDEEFVINPGELVLAVTHEWIEINAPDITGVLHGRSSLGRLGIQAHVEAGYVDPGWRGRLTLELVNFNPMPVKLRPGMRVVQIVFHRLSSPAERTYAESSGKYHGDERPSPSKMHLDFCRG</sequence>
<protein>
    <recommendedName>
        <fullName evidence="1">dCTP deaminase, dUMP-forming</fullName>
        <ecNumber evidence="1">3.5.4.30</ecNumber>
    </recommendedName>
    <alternativeName>
        <fullName evidence="1">Bifunctional dCTP deaminase:dUTPase</fullName>
    </alternativeName>
    <alternativeName>
        <fullName evidence="1">DCD-DUT</fullName>
    </alternativeName>
</protein>
<comment type="function">
    <text evidence="1">Bifunctional enzyme that catalyzes both the deamination of dCTP to dUTP and the hydrolysis of dUTP to dUMP without releasing the toxic dUTP intermediate.</text>
</comment>
<comment type="catalytic activity">
    <reaction evidence="1">
        <text>dCTP + 2 H2O = dUMP + NH4(+) + diphosphate</text>
        <dbReference type="Rhea" id="RHEA:19205"/>
        <dbReference type="ChEBI" id="CHEBI:15377"/>
        <dbReference type="ChEBI" id="CHEBI:28938"/>
        <dbReference type="ChEBI" id="CHEBI:33019"/>
        <dbReference type="ChEBI" id="CHEBI:61481"/>
        <dbReference type="ChEBI" id="CHEBI:246422"/>
        <dbReference type="EC" id="3.5.4.30"/>
    </reaction>
</comment>
<comment type="pathway">
    <text evidence="1">Pyrimidine metabolism; dUMP biosynthesis; dUMP from dCTP: step 1/1.</text>
</comment>
<comment type="subunit">
    <text evidence="1">Homotrimer.</text>
</comment>
<comment type="similarity">
    <text evidence="1">Belongs to the dCTP deaminase family.</text>
</comment>